<accession>Q9KWK4</accession>
<accession>A7WZ15</accession>
<reference key="1">
    <citation type="journal article" date="2000" name="Biochem. Biophys. Res. Commun.">
        <title>Identification of the up- and down-regulated genes in vancomycin-resistant Staphylococcus aureus strains Mu3 and Mu50 by cDNA differential hybridization method.</title>
        <authorList>
            <person name="Kuroda M."/>
            <person name="Kuwahara-Arai K."/>
            <person name="Hiramatsu K."/>
        </authorList>
    </citation>
    <scope>NUCLEOTIDE SEQUENCE [GENOMIC DNA]</scope>
    <scope>VANCOMYCIN RESISTANCE</scope>
</reference>
<reference key="2">
    <citation type="journal article" date="2008" name="Antimicrob. Agents Chemother.">
        <title>Mutated response regulator graR is responsible for phenotypic conversion of Staphylococcus aureus from heterogeneous vancomycin-intermediate resistance to vancomycin-intermediate resistance.</title>
        <authorList>
            <person name="Neoh H.-M."/>
            <person name="Cui L."/>
            <person name="Yuzawa H."/>
            <person name="Takeuchi F."/>
            <person name="Matsuo M."/>
            <person name="Hiramatsu K."/>
        </authorList>
    </citation>
    <scope>NUCLEOTIDE SEQUENCE [LARGE SCALE GENOMIC DNA]</scope>
    <source>
        <strain>Mu3 / ATCC 700698</strain>
    </source>
</reference>
<comment type="miscellaneous">
    <text>May contribute to vancomycin resistance.</text>
</comment>
<comment type="similarity">
    <text evidence="2">Belongs to the thiolase-like superfamily. Thiolase family.</text>
</comment>
<keyword id="KW-0012">Acyltransferase</keyword>
<keyword id="KW-0808">Transferase</keyword>
<feature type="chain" id="PRO_0000206425" description="Putative acetyl-CoA C-acetyltransferase VraB">
    <location>
        <begin position="1"/>
        <end position="379"/>
    </location>
</feature>
<feature type="active site" description="Acyl-thioester intermediate" evidence="1">
    <location>
        <position position="86"/>
    </location>
</feature>
<feature type="active site" description="Proton acceptor" evidence="1">
    <location>
        <position position="338"/>
    </location>
</feature>
<evidence type="ECO:0000250" key="1"/>
<evidence type="ECO:0000305" key="2"/>
<proteinExistence type="inferred from homology"/>
<protein>
    <recommendedName>
        <fullName>Putative acetyl-CoA C-acetyltransferase VraB</fullName>
        <ecNumber>2.3.1.-</ecNumber>
    </recommendedName>
</protein>
<sequence>MNQAVIVAAKRTAFGKYGGTLKHLEPEQLLKPLFQHFKEKYPEVISKIDDVVLGNVVGNGGNIARKALLEAGLKDSIPGVTIDRQCGSGLESVQYACRMIQAGAGKVYIAGGVESTSRAPWKIKRPHSVYETALPEFYERASFAPEMSDPSMIQGAENVAKMYDVSRELQDEFAYRSHQLTAENVKNGNISQEILPITVKGEIFNTDESLKSHIPKDNFGRFKPVIKGGTVTAANSCMKNDGAVLLLIMEKDMAYELGFEHGLLFKDGVTVGVDSNFPGIGPVPAISNLLKRNQLTIENIEVIEINEAFSAQVVACQQALNISNTQLNIWGGALASGHPYGASGAQLVTRLFYMFDKETMIASMGIGGGLGNAALFTRF</sequence>
<gene>
    <name type="primary">vraB</name>
    <name type="ordered locus">SAHV_0574</name>
</gene>
<name>VRAB_STAA1</name>
<organism>
    <name type="scientific">Staphylococcus aureus (strain Mu3 / ATCC 700698)</name>
    <dbReference type="NCBI Taxonomy" id="418127"/>
    <lineage>
        <taxon>Bacteria</taxon>
        <taxon>Bacillati</taxon>
        <taxon>Bacillota</taxon>
        <taxon>Bacilli</taxon>
        <taxon>Bacillales</taxon>
        <taxon>Staphylococcaceae</taxon>
        <taxon>Staphylococcus</taxon>
    </lineage>
</organism>
<dbReference type="EC" id="2.3.1.-"/>
<dbReference type="EMBL" id="AB035449">
    <property type="protein sequence ID" value="BAB03328.1"/>
    <property type="molecule type" value="Genomic_DNA"/>
</dbReference>
<dbReference type="EMBL" id="AP009324">
    <property type="protein sequence ID" value="BAF77457.1"/>
    <property type="molecule type" value="Genomic_DNA"/>
</dbReference>
<dbReference type="PIR" id="B89826">
    <property type="entry name" value="B89826"/>
</dbReference>
<dbReference type="RefSeq" id="WP_001070676.1">
    <property type="nucleotide sequence ID" value="NC_009782.1"/>
</dbReference>
<dbReference type="SMR" id="Q9KWK4"/>
<dbReference type="KEGG" id="saw:SAHV_0574"/>
<dbReference type="HOGENOM" id="CLU_031026_2_1_9"/>
<dbReference type="GO" id="GO:0005737">
    <property type="term" value="C:cytoplasm"/>
    <property type="evidence" value="ECO:0007669"/>
    <property type="project" value="UniProtKB-ARBA"/>
</dbReference>
<dbReference type="GO" id="GO:0003988">
    <property type="term" value="F:acetyl-CoA C-acyltransferase activity"/>
    <property type="evidence" value="ECO:0007669"/>
    <property type="project" value="TreeGrafter"/>
</dbReference>
<dbReference type="GO" id="GO:0006635">
    <property type="term" value="P:fatty acid beta-oxidation"/>
    <property type="evidence" value="ECO:0007669"/>
    <property type="project" value="TreeGrafter"/>
</dbReference>
<dbReference type="GO" id="GO:0010124">
    <property type="term" value="P:phenylacetate catabolic process"/>
    <property type="evidence" value="ECO:0007669"/>
    <property type="project" value="TreeGrafter"/>
</dbReference>
<dbReference type="CDD" id="cd00751">
    <property type="entry name" value="thiolase"/>
    <property type="match status" value="1"/>
</dbReference>
<dbReference type="Gene3D" id="3.40.47.10">
    <property type="match status" value="2"/>
</dbReference>
<dbReference type="InterPro" id="IPR002155">
    <property type="entry name" value="Thiolase"/>
</dbReference>
<dbReference type="InterPro" id="IPR016039">
    <property type="entry name" value="Thiolase-like"/>
</dbReference>
<dbReference type="InterPro" id="IPR050215">
    <property type="entry name" value="Thiolase-like_sf_Thiolase"/>
</dbReference>
<dbReference type="InterPro" id="IPR020617">
    <property type="entry name" value="Thiolase_C"/>
</dbReference>
<dbReference type="InterPro" id="IPR020613">
    <property type="entry name" value="Thiolase_CS"/>
</dbReference>
<dbReference type="InterPro" id="IPR020616">
    <property type="entry name" value="Thiolase_N"/>
</dbReference>
<dbReference type="NCBIfam" id="TIGR01930">
    <property type="entry name" value="AcCoA-C-Actrans"/>
    <property type="match status" value="1"/>
</dbReference>
<dbReference type="PANTHER" id="PTHR43853">
    <property type="entry name" value="3-KETOACYL-COA THIOLASE, PEROXISOMAL"/>
    <property type="match status" value="1"/>
</dbReference>
<dbReference type="PANTHER" id="PTHR43853:SF3">
    <property type="entry name" value="ACETYL-COA C-ACETYLTRANSFERASE YHFS-RELATED"/>
    <property type="match status" value="1"/>
</dbReference>
<dbReference type="Pfam" id="PF02803">
    <property type="entry name" value="Thiolase_C"/>
    <property type="match status" value="1"/>
</dbReference>
<dbReference type="Pfam" id="PF00108">
    <property type="entry name" value="Thiolase_N"/>
    <property type="match status" value="1"/>
</dbReference>
<dbReference type="PIRSF" id="PIRSF000429">
    <property type="entry name" value="Ac-CoA_Ac_transf"/>
    <property type="match status" value="1"/>
</dbReference>
<dbReference type="SUPFAM" id="SSF53901">
    <property type="entry name" value="Thiolase-like"/>
    <property type="match status" value="2"/>
</dbReference>
<dbReference type="PROSITE" id="PS00737">
    <property type="entry name" value="THIOLASE_2"/>
    <property type="match status" value="1"/>
</dbReference>